<name>CAD2_RAUSE</name>
<comment type="function">
    <text evidence="5">Alcohol dehydrogenase that catalyzes the conversion of (E)-cinnamyl alcohol to (E)-cinnamaldehyde.</text>
</comment>
<comment type="catalytic activity">
    <reaction evidence="5">
        <text>(E)-cinnamyl alcohol + NADP(+) = (E)-cinnamaldehyde + NADPH + H(+)</text>
        <dbReference type="Rhea" id="RHEA:10392"/>
        <dbReference type="ChEBI" id="CHEBI:15378"/>
        <dbReference type="ChEBI" id="CHEBI:16731"/>
        <dbReference type="ChEBI" id="CHEBI:33227"/>
        <dbReference type="ChEBI" id="CHEBI:57783"/>
        <dbReference type="ChEBI" id="CHEBI:58349"/>
        <dbReference type="EC" id="1.1.1.195"/>
    </reaction>
    <physiologicalReaction direction="right-to-left" evidence="5">
        <dbReference type="Rhea" id="RHEA:10394"/>
    </physiologicalReaction>
</comment>
<comment type="cofactor">
    <cofactor evidence="2">
        <name>Zn(2+)</name>
        <dbReference type="ChEBI" id="CHEBI:29105"/>
    </cofactor>
    <text evidence="2">Binds 2 Zn(2+) ions per subunit.</text>
</comment>
<comment type="subunit">
    <text evidence="2">Homodimer.</text>
</comment>
<comment type="subcellular location">
    <subcellularLocation>
        <location evidence="2">Cytoplasm</location>
    </subcellularLocation>
</comment>
<comment type="tissue specificity">
    <text evidence="5">Mainly expressed in young roots and, to a lower extent, in stems and leaves.</text>
</comment>
<comment type="similarity">
    <text evidence="7">Belongs to the zinc-containing alcohol dehydrogenase family. Class-P subfamily.</text>
</comment>
<gene>
    <name evidence="6" type="primary">CAD2</name>
    <name evidence="6" type="synonym">RR6</name>
</gene>
<keyword id="KW-0963">Cytoplasm</keyword>
<keyword id="KW-0903">Direct protein sequencing</keyword>
<keyword id="KW-0479">Metal-binding</keyword>
<keyword id="KW-0521">NADP</keyword>
<keyword id="KW-0560">Oxidoreductase</keyword>
<keyword id="KW-0862">Zinc</keyword>
<organism>
    <name type="scientific">Rauvolfia serpentina</name>
    <name type="common">Serpentine wood</name>
    <name type="synonym">Ophioxylon serpentinum</name>
    <dbReference type="NCBI Taxonomy" id="4060"/>
    <lineage>
        <taxon>Eukaryota</taxon>
        <taxon>Viridiplantae</taxon>
        <taxon>Streptophyta</taxon>
        <taxon>Embryophyta</taxon>
        <taxon>Tracheophyta</taxon>
        <taxon>Spermatophyta</taxon>
        <taxon>Magnoliopsida</taxon>
        <taxon>eudicotyledons</taxon>
        <taxon>Gunneridae</taxon>
        <taxon>Pentapetalae</taxon>
        <taxon>asterids</taxon>
        <taxon>lamiids</taxon>
        <taxon>Gentianales</taxon>
        <taxon>Apocynaceae</taxon>
        <taxon>Rauvolfioideae</taxon>
        <taxon>Vinceae</taxon>
        <taxon>Rauvolfiinae</taxon>
        <taxon>Rauvolfia</taxon>
    </lineage>
</organism>
<proteinExistence type="evidence at protein level"/>
<feature type="chain" id="PRO_0000462314" description="Cinnamyl alcohol dehydrogenase 2">
    <location>
        <begin position="1"/>
        <end position="360"/>
    </location>
</feature>
<feature type="domain" description="Enoyl reductase (ER)" evidence="4">
    <location>
        <begin position="23"/>
        <end position="351"/>
    </location>
</feature>
<feature type="binding site" evidence="2">
    <location>
        <position position="50"/>
    </location>
    <ligand>
        <name>Zn(2+)</name>
        <dbReference type="ChEBI" id="CHEBI:29105"/>
        <label>1</label>
        <note>catalytic</note>
    </ligand>
</feature>
<feature type="binding site" evidence="2">
    <location>
        <position position="52"/>
    </location>
    <ligand>
        <name>an alcohol</name>
        <dbReference type="ChEBI" id="CHEBI:30879"/>
    </ligand>
</feature>
<feature type="binding site" evidence="2">
    <location>
        <position position="52"/>
    </location>
    <ligand>
        <name>NADP(+)</name>
        <dbReference type="ChEBI" id="CHEBI:58349"/>
    </ligand>
</feature>
<feature type="binding site" evidence="2">
    <location>
        <position position="53"/>
    </location>
    <ligand>
        <name>Zn(2+)</name>
        <dbReference type="ChEBI" id="CHEBI:29105"/>
        <label>1</label>
        <note>catalytic</note>
    </ligand>
</feature>
<feature type="binding site" evidence="1">
    <location>
        <position position="72"/>
    </location>
    <ligand>
        <name>an alcohol</name>
        <dbReference type="ChEBI" id="CHEBI:30879"/>
    </ligand>
</feature>
<feature type="binding site" evidence="2">
    <location>
        <position position="72"/>
    </location>
    <ligand>
        <name>Zn(2+)</name>
        <dbReference type="ChEBI" id="CHEBI:29105"/>
        <label>1</label>
        <note>catalytic</note>
    </ligand>
</feature>
<feature type="binding site" evidence="2">
    <location>
        <position position="73"/>
    </location>
    <ligand>
        <name>Zn(2+)</name>
        <dbReference type="ChEBI" id="CHEBI:29105"/>
        <label>1</label>
        <note>catalytic</note>
    </ligand>
</feature>
<feature type="binding site" evidence="2">
    <location>
        <position position="103"/>
    </location>
    <ligand>
        <name>Zn(2+)</name>
        <dbReference type="ChEBI" id="CHEBI:29105"/>
        <label>2</label>
    </ligand>
</feature>
<feature type="binding site" evidence="2">
    <location>
        <position position="106"/>
    </location>
    <ligand>
        <name>Zn(2+)</name>
        <dbReference type="ChEBI" id="CHEBI:29105"/>
        <label>2</label>
    </ligand>
</feature>
<feature type="binding site" evidence="2">
    <location>
        <position position="109"/>
    </location>
    <ligand>
        <name>Zn(2+)</name>
        <dbReference type="ChEBI" id="CHEBI:29105"/>
        <label>2</label>
    </ligand>
</feature>
<feature type="binding site" evidence="2">
    <location>
        <position position="117"/>
    </location>
    <ligand>
        <name>Zn(2+)</name>
        <dbReference type="ChEBI" id="CHEBI:29105"/>
        <label>2</label>
    </ligand>
</feature>
<feature type="binding site" evidence="2">
    <location>
        <position position="166"/>
    </location>
    <ligand>
        <name>Zn(2+)</name>
        <dbReference type="ChEBI" id="CHEBI:29105"/>
        <label>1</label>
        <note>catalytic</note>
    </ligand>
</feature>
<feature type="binding site" evidence="3">
    <location>
        <position position="192"/>
    </location>
    <ligand>
        <name>NADP(+)</name>
        <dbReference type="ChEBI" id="CHEBI:58349"/>
    </ligand>
</feature>
<feature type="binding site" evidence="3">
    <location>
        <position position="194"/>
    </location>
    <ligand>
        <name>NADP(+)</name>
        <dbReference type="ChEBI" id="CHEBI:58349"/>
    </ligand>
</feature>
<feature type="binding site" evidence="3">
    <location>
        <position position="195"/>
    </location>
    <ligand>
        <name>NADP(+)</name>
        <dbReference type="ChEBI" id="CHEBI:58349"/>
    </ligand>
</feature>
<feature type="binding site" evidence="3">
    <location>
        <position position="214"/>
    </location>
    <ligand>
        <name>NADP(+)</name>
        <dbReference type="ChEBI" id="CHEBI:58349"/>
    </ligand>
</feature>
<feature type="binding site" evidence="3">
    <location>
        <position position="215"/>
    </location>
    <ligand>
        <name>NADP(+)</name>
        <dbReference type="ChEBI" id="CHEBI:58349"/>
    </ligand>
</feature>
<feature type="binding site" evidence="3">
    <location>
        <position position="216"/>
    </location>
    <ligand>
        <name>NADP(+)</name>
        <dbReference type="ChEBI" id="CHEBI:58349"/>
    </ligand>
</feature>
<feature type="binding site" evidence="3">
    <location>
        <position position="219"/>
    </location>
    <ligand>
        <name>NADP(+)</name>
        <dbReference type="ChEBI" id="CHEBI:58349"/>
    </ligand>
</feature>
<feature type="binding site" evidence="2">
    <location>
        <position position="220"/>
    </location>
    <ligand>
        <name>NADP(+)</name>
        <dbReference type="ChEBI" id="CHEBI:58349"/>
    </ligand>
</feature>
<feature type="binding site" evidence="2">
    <location>
        <position position="277"/>
    </location>
    <ligand>
        <name>NADP(+)</name>
        <dbReference type="ChEBI" id="CHEBI:58349"/>
    </ligand>
</feature>
<feature type="binding site" evidence="2">
    <location>
        <position position="279"/>
    </location>
    <ligand>
        <name>NADP(+)</name>
        <dbReference type="ChEBI" id="CHEBI:58349"/>
    </ligand>
</feature>
<feature type="binding site" evidence="2">
    <location>
        <position position="301"/>
    </location>
    <ligand>
        <name>NADP(+)</name>
        <dbReference type="ChEBI" id="CHEBI:58349"/>
    </ligand>
</feature>
<feature type="binding site" evidence="2">
    <location>
        <position position="348"/>
    </location>
    <ligand>
        <name>NADP(+)</name>
        <dbReference type="ChEBI" id="CHEBI:58349"/>
    </ligand>
</feature>
<reference evidence="8" key="1">
    <citation type="journal article" date="2016" name="Planta">
        <title>A novel cinnamyl alcohol dehydrogenase (CAD)-like reductase contributes to the structural diversity of monoterpenoid indole alkaloids in Rauvolfia.</title>
        <authorList>
            <person name="Geissler M."/>
            <person name="Burghard M."/>
            <person name="Volk J."/>
            <person name="Staniek A."/>
            <person name="Warzecha H."/>
        </authorList>
    </citation>
    <scope>NUCLEOTIDE SEQUENCE [MRNA]</scope>
    <scope>PROTEIN SEQUENCE OF 43-53 AND 66-77</scope>
    <scope>FUNCTION</scope>
    <scope>CATALYTIC ACTIVITY</scope>
    <scope>TISSUE SPECIFICITY</scope>
</reference>
<accession>A0A0U4AHM6</accession>
<sequence length="360" mass="38754">MAKSPEVEHPVKAFGWAARDPSGVLSPFNFSRRATGEHDVQFKVLYCGICHSDLHMIKNEWGFTKYPIVPGHEIVGVVTEVGSKVEKFKVGDKVGVGCLVGSCRKCDMCSDDLENYCPGQILTYSAAYTDGTTTYGGYSNLMVSDEHFVICWPENLPMDIGAPLLCAGITTYSPLRYFGLDKPGTHVGVVGLGGLGHVAVKFAKAFGAKVTVISTSESKKQEAIEKLGADAFLVSRDPEQMQGAAGSMDGIIDTVSAVHPVLPLVNLLKSQGKLIMVGAPEKPLELPVFPLLAGRRIIAGSAIGGLKETQEMIDFAAKNNILPDVELVPMDYVNTAMERLLKADVKYRFVIDIGNTLKSA</sequence>
<protein>
    <recommendedName>
        <fullName evidence="6">Cinnamyl alcohol dehydrogenase 2</fullName>
        <shortName evidence="6">RsCAD2</shortName>
        <ecNumber evidence="5">1.1.1.195</ecNumber>
    </recommendedName>
    <alternativeName>
        <fullName evidence="6">Protein RR6</fullName>
        <shortName evidence="6">RsRR6</shortName>
    </alternativeName>
</protein>
<evidence type="ECO:0000250" key="1">
    <source>
        <dbReference type="UniProtKB" id="P00327"/>
    </source>
</evidence>
<evidence type="ECO:0000250" key="2">
    <source>
        <dbReference type="UniProtKB" id="P06525"/>
    </source>
</evidence>
<evidence type="ECO:0000250" key="3">
    <source>
        <dbReference type="UniProtKB" id="W8JWW7"/>
    </source>
</evidence>
<evidence type="ECO:0000255" key="4"/>
<evidence type="ECO:0000269" key="5">
    <source>
    </source>
</evidence>
<evidence type="ECO:0000303" key="6">
    <source>
    </source>
</evidence>
<evidence type="ECO:0000305" key="7"/>
<evidence type="ECO:0000312" key="8">
    <source>
        <dbReference type="EMBL" id="ALW82980.1"/>
    </source>
</evidence>
<dbReference type="EC" id="1.1.1.195" evidence="5"/>
<dbReference type="EMBL" id="KT369739">
    <property type="protein sequence ID" value="ALW82980.1"/>
    <property type="molecule type" value="mRNA"/>
</dbReference>
<dbReference type="SMR" id="A0A0U4AHM6"/>
<dbReference type="GO" id="GO:0045551">
    <property type="term" value="F:cinnamyl-alcohol dehydrogenase activity"/>
    <property type="evidence" value="ECO:0007669"/>
    <property type="project" value="UniProtKB-EC"/>
</dbReference>
<dbReference type="GO" id="GO:0008270">
    <property type="term" value="F:zinc ion binding"/>
    <property type="evidence" value="ECO:0007669"/>
    <property type="project" value="InterPro"/>
</dbReference>
<dbReference type="GO" id="GO:0009820">
    <property type="term" value="P:alkaloid metabolic process"/>
    <property type="evidence" value="ECO:0007669"/>
    <property type="project" value="UniProtKB-ARBA"/>
</dbReference>
<dbReference type="CDD" id="cd05283">
    <property type="entry name" value="CAD1"/>
    <property type="match status" value="1"/>
</dbReference>
<dbReference type="FunFam" id="3.40.50.720:FF:000022">
    <property type="entry name" value="Cinnamyl alcohol dehydrogenase"/>
    <property type="match status" value="1"/>
</dbReference>
<dbReference type="FunFam" id="3.90.180.10:FF:000100">
    <property type="entry name" value="Putative cinnamyl alcohol dehydrogenase 6"/>
    <property type="match status" value="1"/>
</dbReference>
<dbReference type="FunFam" id="3.90.180.10:FF:000126">
    <property type="entry name" value="Uncharacterized protein"/>
    <property type="match status" value="1"/>
</dbReference>
<dbReference type="Gene3D" id="3.90.180.10">
    <property type="entry name" value="Medium-chain alcohol dehydrogenases, catalytic domain"/>
    <property type="match status" value="1"/>
</dbReference>
<dbReference type="Gene3D" id="3.40.50.720">
    <property type="entry name" value="NAD(P)-binding Rossmann-like Domain"/>
    <property type="match status" value="1"/>
</dbReference>
<dbReference type="InterPro" id="IPR013149">
    <property type="entry name" value="ADH-like_C"/>
</dbReference>
<dbReference type="InterPro" id="IPR013154">
    <property type="entry name" value="ADH-like_N"/>
</dbReference>
<dbReference type="InterPro" id="IPR002328">
    <property type="entry name" value="ADH_Zn_CS"/>
</dbReference>
<dbReference type="InterPro" id="IPR047109">
    <property type="entry name" value="CAD-like"/>
</dbReference>
<dbReference type="InterPro" id="IPR011032">
    <property type="entry name" value="GroES-like_sf"/>
</dbReference>
<dbReference type="InterPro" id="IPR036291">
    <property type="entry name" value="NAD(P)-bd_dom_sf"/>
</dbReference>
<dbReference type="InterPro" id="IPR020843">
    <property type="entry name" value="PKS_ER"/>
</dbReference>
<dbReference type="PANTHER" id="PTHR42683">
    <property type="entry name" value="ALDEHYDE REDUCTASE"/>
    <property type="match status" value="1"/>
</dbReference>
<dbReference type="Pfam" id="PF08240">
    <property type="entry name" value="ADH_N"/>
    <property type="match status" value="1"/>
</dbReference>
<dbReference type="Pfam" id="PF00107">
    <property type="entry name" value="ADH_zinc_N"/>
    <property type="match status" value="1"/>
</dbReference>
<dbReference type="SMART" id="SM00829">
    <property type="entry name" value="PKS_ER"/>
    <property type="match status" value="1"/>
</dbReference>
<dbReference type="SUPFAM" id="SSF50129">
    <property type="entry name" value="GroES-like"/>
    <property type="match status" value="1"/>
</dbReference>
<dbReference type="SUPFAM" id="SSF51735">
    <property type="entry name" value="NAD(P)-binding Rossmann-fold domains"/>
    <property type="match status" value="1"/>
</dbReference>
<dbReference type="PROSITE" id="PS00059">
    <property type="entry name" value="ADH_ZINC"/>
    <property type="match status" value="1"/>
</dbReference>